<dbReference type="EC" id="4.2.99.-" evidence="1"/>
<dbReference type="EMBL" id="AM420293">
    <property type="protein sequence ID" value="CAM02658.1"/>
    <property type="molecule type" value="Genomic_DNA"/>
</dbReference>
<dbReference type="RefSeq" id="WP_009949602.1">
    <property type="nucleotide sequence ID" value="NC_009142.1"/>
</dbReference>
<dbReference type="SMR" id="A4FF33"/>
<dbReference type="STRING" id="405948.SACE_3383"/>
<dbReference type="KEGG" id="sen:SACE_3383"/>
<dbReference type="eggNOG" id="COG4257">
    <property type="taxonomic scope" value="Bacteria"/>
</dbReference>
<dbReference type="HOGENOM" id="CLU_054751_1_0_11"/>
<dbReference type="OrthoDB" id="9812926at2"/>
<dbReference type="Proteomes" id="UP000006728">
    <property type="component" value="Chromosome"/>
</dbReference>
<dbReference type="GO" id="GO:0030288">
    <property type="term" value="C:outer membrane-bounded periplasmic space"/>
    <property type="evidence" value="ECO:0007669"/>
    <property type="project" value="TreeGrafter"/>
</dbReference>
<dbReference type="GO" id="GO:0016835">
    <property type="term" value="F:carbon-oxygen lyase activity"/>
    <property type="evidence" value="ECO:0007669"/>
    <property type="project" value="UniProtKB-UniRule"/>
</dbReference>
<dbReference type="GO" id="GO:0000287">
    <property type="term" value="F:magnesium ion binding"/>
    <property type="evidence" value="ECO:0007669"/>
    <property type="project" value="InterPro"/>
</dbReference>
<dbReference type="GO" id="GO:0017001">
    <property type="term" value="P:antibiotic catabolic process"/>
    <property type="evidence" value="ECO:0007669"/>
    <property type="project" value="UniProtKB-UniRule"/>
</dbReference>
<dbReference type="GO" id="GO:0046677">
    <property type="term" value="P:response to antibiotic"/>
    <property type="evidence" value="ECO:0007669"/>
    <property type="project" value="UniProtKB-KW"/>
</dbReference>
<dbReference type="Gene3D" id="2.130.10.10">
    <property type="entry name" value="YVTN repeat-like/Quinoprotein amine dehydrogenase"/>
    <property type="match status" value="1"/>
</dbReference>
<dbReference type="HAMAP" id="MF_01282">
    <property type="entry name" value="VirginiamycinB_lyase"/>
    <property type="match status" value="1"/>
</dbReference>
<dbReference type="InterPro" id="IPR011217">
    <property type="entry name" value="Streptogrm_lyase"/>
</dbReference>
<dbReference type="InterPro" id="IPR051344">
    <property type="entry name" value="Vgb"/>
</dbReference>
<dbReference type="InterPro" id="IPR015943">
    <property type="entry name" value="WD40/YVTN_repeat-like_dom_sf"/>
</dbReference>
<dbReference type="PANTHER" id="PTHR40274">
    <property type="entry name" value="VIRGINIAMYCIN B LYASE"/>
    <property type="match status" value="1"/>
</dbReference>
<dbReference type="PANTHER" id="PTHR40274:SF3">
    <property type="entry name" value="VIRGINIAMYCIN B LYASE"/>
    <property type="match status" value="1"/>
</dbReference>
<dbReference type="Pfam" id="PF24684">
    <property type="entry name" value="Vgb_lyase"/>
    <property type="match status" value="1"/>
</dbReference>
<dbReference type="PIRSF" id="PIRSF026412">
    <property type="entry name" value="Streptogrm_lyase"/>
    <property type="match status" value="1"/>
</dbReference>
<dbReference type="SUPFAM" id="SSF101898">
    <property type="entry name" value="NHL repeat"/>
    <property type="match status" value="1"/>
</dbReference>
<proteinExistence type="inferred from homology"/>
<comment type="function">
    <text evidence="1">Inactivates the type B streptogramin antibiotics by linearizing the lactone ring at the ester linkage, generating a free phenylglycine carboxylate and converting the threonyl moiety into 2-amino-butenoic acid.</text>
</comment>
<comment type="cofactor">
    <cofactor evidence="1">
        <name>Mg(2+)</name>
        <dbReference type="ChEBI" id="CHEBI:18420"/>
    </cofactor>
</comment>
<comment type="subunit">
    <text evidence="1">Monomer.</text>
</comment>
<comment type="similarity">
    <text evidence="1">Belongs to the Vgb family.</text>
</comment>
<name>VGB_SACEN</name>
<reference key="1">
    <citation type="journal article" date="2007" name="Nat. Biotechnol.">
        <title>Complete genome sequence of the erythromycin-producing bacterium Saccharopolyspora erythraea NRRL23338.</title>
        <authorList>
            <person name="Oliynyk M."/>
            <person name="Samborskyy M."/>
            <person name="Lester J.B."/>
            <person name="Mironenko T."/>
            <person name="Scott N."/>
            <person name="Dickens S."/>
            <person name="Haydock S.F."/>
            <person name="Leadlay P.F."/>
        </authorList>
    </citation>
    <scope>NUCLEOTIDE SEQUENCE [LARGE SCALE GENOMIC DNA]</scope>
    <source>
        <strain>ATCC 11635 / DSM 40517 / JCM 4748 / NBRC 13426 / NCIMB 8594 / NRRL 2338</strain>
    </source>
</reference>
<protein>
    <recommendedName>
        <fullName evidence="1">Virginiamycin B lyase</fullName>
        <ecNumber evidence="1">4.2.99.-</ecNumber>
    </recommendedName>
    <alternativeName>
        <fullName evidence="1">Streptogramin B lyase</fullName>
    </alternativeName>
</protein>
<accession>A4FF33</accession>
<gene>
    <name evidence="1" type="primary">vgb</name>
    <name type="ordered locus">SACE_3383</name>
</gene>
<keyword id="KW-0046">Antibiotic resistance</keyword>
<keyword id="KW-0456">Lyase</keyword>
<keyword id="KW-0460">Magnesium</keyword>
<keyword id="KW-0479">Metal-binding</keyword>
<keyword id="KW-1185">Reference proteome</keyword>
<feature type="chain" id="PRO_0000313777" description="Virginiamycin B lyase">
    <location>
        <begin position="1"/>
        <end position="300"/>
    </location>
</feature>
<feature type="active site" description="Proton acceptor" evidence="1">
    <location>
        <position position="272"/>
    </location>
</feature>
<feature type="binding site" evidence="1">
    <location>
        <position position="231"/>
    </location>
    <ligand>
        <name>substrate</name>
    </ligand>
</feature>
<feature type="binding site" evidence="1">
    <location>
        <position position="270"/>
    </location>
    <ligand>
        <name>Mg(2+)</name>
        <dbReference type="ChEBI" id="CHEBI:18420"/>
    </ligand>
</feature>
<feature type="binding site" evidence="1">
    <location>
        <position position="287"/>
    </location>
    <ligand>
        <name>Mg(2+)</name>
        <dbReference type="ChEBI" id="CHEBI:18420"/>
    </ligand>
</feature>
<organism>
    <name type="scientific">Saccharopolyspora erythraea (strain ATCC 11635 / DSM 40517 / JCM 4748 / NBRC 13426 / NCIMB 8594 / NRRL 2338)</name>
    <dbReference type="NCBI Taxonomy" id="405948"/>
    <lineage>
        <taxon>Bacteria</taxon>
        <taxon>Bacillati</taxon>
        <taxon>Actinomycetota</taxon>
        <taxon>Actinomycetes</taxon>
        <taxon>Pseudonocardiales</taxon>
        <taxon>Pseudonocardiaceae</taxon>
        <taxon>Saccharopolyspora</taxon>
    </lineage>
</organism>
<evidence type="ECO:0000255" key="1">
    <source>
        <dbReference type="HAMAP-Rule" id="MF_01282"/>
    </source>
</evidence>
<sequence>MARERTVEIREHEVPDPAGGPYGITAGPDGALWFTLVHSGLIARLAPGGEATTHRLDADSGPAIITAGADGALWFTEHRAHRIGRLTTEDGLTEFAPPTPQAGPYGLATGADGALWFTEASAGRIGRITAEGEIAEFGLPVPGAFPSMIAAGPDDAMWFTANQANAIGRMSFDGTAVLHELPTEAAAPVGLALGPDGALWFTEIGAGQIGRVTADGAISEFPLPDRTSRPHAIVARGDELWFTEWGANRVGRIDLDGRIDVHELPTPNSEPHGIAVGQDGALWVALENGALARVAPESHD</sequence>